<reference key="1">
    <citation type="journal article" date="2009" name="Genome Biol.">
        <title>Genomic and genetic analyses of diversity and plant interactions of Pseudomonas fluorescens.</title>
        <authorList>
            <person name="Silby M.W."/>
            <person name="Cerdeno-Tarraga A.M."/>
            <person name="Vernikos G.S."/>
            <person name="Giddens S.R."/>
            <person name="Jackson R.W."/>
            <person name="Preston G.M."/>
            <person name="Zhang X.-X."/>
            <person name="Moon C.D."/>
            <person name="Gehrig S.M."/>
            <person name="Godfrey S.A.C."/>
            <person name="Knight C.G."/>
            <person name="Malone J.G."/>
            <person name="Robinson Z."/>
            <person name="Spiers A.J."/>
            <person name="Harris S."/>
            <person name="Challis G.L."/>
            <person name="Yaxley A.M."/>
            <person name="Harris D."/>
            <person name="Seeger K."/>
            <person name="Murphy L."/>
            <person name="Rutter S."/>
            <person name="Squares R."/>
            <person name="Quail M.A."/>
            <person name="Saunders E."/>
            <person name="Mavromatis K."/>
            <person name="Brettin T.S."/>
            <person name="Bentley S.D."/>
            <person name="Hothersall J."/>
            <person name="Stephens E."/>
            <person name="Thomas C.M."/>
            <person name="Parkhill J."/>
            <person name="Levy S.B."/>
            <person name="Rainey P.B."/>
            <person name="Thomson N.R."/>
        </authorList>
    </citation>
    <scope>NUCLEOTIDE SEQUENCE [LARGE SCALE GENOMIC DNA]</scope>
    <source>
        <strain>SBW25</strain>
    </source>
</reference>
<keyword id="KW-0687">Ribonucleoprotein</keyword>
<keyword id="KW-0689">Ribosomal protein</keyword>
<keyword id="KW-0694">RNA-binding</keyword>
<keyword id="KW-0699">rRNA-binding</keyword>
<feature type="chain" id="PRO_1000205449" description="Large ribosomal subunit protein uL10">
    <location>
        <begin position="1"/>
        <end position="166"/>
    </location>
</feature>
<organism>
    <name type="scientific">Pseudomonas fluorescens (strain SBW25)</name>
    <dbReference type="NCBI Taxonomy" id="216595"/>
    <lineage>
        <taxon>Bacteria</taxon>
        <taxon>Pseudomonadati</taxon>
        <taxon>Pseudomonadota</taxon>
        <taxon>Gammaproteobacteria</taxon>
        <taxon>Pseudomonadales</taxon>
        <taxon>Pseudomonadaceae</taxon>
        <taxon>Pseudomonas</taxon>
    </lineage>
</organism>
<name>RL10_PSEFS</name>
<gene>
    <name evidence="1" type="primary">rplJ</name>
    <name type="ordered locus">PFLU_5536</name>
</gene>
<accession>C3K2Y5</accession>
<sequence>MAINLEDKKAIVAEVNEAAKAALSAVVADARGVTVSAMTGLRKEAREAGVYVRVVRNTLLKRAVADTEYSVLNDVFTGPTLIAFSTDHPGAAARLFKEFAKGQDKFEIKAAAFEGKFLAANQIDVLATLPTRNEAISQLMSVIQGATSKLARTLAAVREQKEAAAA</sequence>
<proteinExistence type="inferred from homology"/>
<comment type="function">
    <text evidence="1">Forms part of the ribosomal stalk, playing a central role in the interaction of the ribosome with GTP-bound translation factors.</text>
</comment>
<comment type="subunit">
    <text evidence="1">Part of the ribosomal stalk of the 50S ribosomal subunit. The N-terminus interacts with L11 and the large rRNA to form the base of the stalk. The C-terminus forms an elongated spine to which L12 dimers bind in a sequential fashion forming a multimeric L10(L12)X complex.</text>
</comment>
<comment type="similarity">
    <text evidence="1">Belongs to the universal ribosomal protein uL10 family.</text>
</comment>
<protein>
    <recommendedName>
        <fullName evidence="1">Large ribosomal subunit protein uL10</fullName>
    </recommendedName>
    <alternativeName>
        <fullName evidence="2">50S ribosomal protein L10</fullName>
    </alternativeName>
</protein>
<dbReference type="EMBL" id="AM181176">
    <property type="protein sequence ID" value="CAY52781.1"/>
    <property type="molecule type" value="Genomic_DNA"/>
</dbReference>
<dbReference type="RefSeq" id="WP_015886139.1">
    <property type="nucleotide sequence ID" value="NC_012660.1"/>
</dbReference>
<dbReference type="STRING" id="294.SRM1_05188"/>
<dbReference type="GeneID" id="93467158"/>
<dbReference type="eggNOG" id="COG0244">
    <property type="taxonomic scope" value="Bacteria"/>
</dbReference>
<dbReference type="HOGENOM" id="CLU_092227_0_2_6"/>
<dbReference type="OrthoDB" id="9808307at2"/>
<dbReference type="GO" id="GO:0015934">
    <property type="term" value="C:large ribosomal subunit"/>
    <property type="evidence" value="ECO:0007669"/>
    <property type="project" value="InterPro"/>
</dbReference>
<dbReference type="GO" id="GO:0070180">
    <property type="term" value="F:large ribosomal subunit rRNA binding"/>
    <property type="evidence" value="ECO:0007669"/>
    <property type="project" value="UniProtKB-UniRule"/>
</dbReference>
<dbReference type="GO" id="GO:0003735">
    <property type="term" value="F:structural constituent of ribosome"/>
    <property type="evidence" value="ECO:0007669"/>
    <property type="project" value="InterPro"/>
</dbReference>
<dbReference type="GO" id="GO:0006412">
    <property type="term" value="P:translation"/>
    <property type="evidence" value="ECO:0007669"/>
    <property type="project" value="UniProtKB-UniRule"/>
</dbReference>
<dbReference type="CDD" id="cd05797">
    <property type="entry name" value="Ribosomal_L10"/>
    <property type="match status" value="1"/>
</dbReference>
<dbReference type="FunFam" id="3.30.70.1730:FF:000001">
    <property type="entry name" value="50S ribosomal protein L10"/>
    <property type="match status" value="1"/>
</dbReference>
<dbReference type="Gene3D" id="3.30.70.1730">
    <property type="match status" value="1"/>
</dbReference>
<dbReference type="Gene3D" id="6.10.250.2350">
    <property type="match status" value="1"/>
</dbReference>
<dbReference type="HAMAP" id="MF_00362">
    <property type="entry name" value="Ribosomal_uL10"/>
    <property type="match status" value="1"/>
</dbReference>
<dbReference type="InterPro" id="IPR001790">
    <property type="entry name" value="Ribosomal_uL10"/>
</dbReference>
<dbReference type="InterPro" id="IPR043141">
    <property type="entry name" value="Ribosomal_uL10-like_sf"/>
</dbReference>
<dbReference type="InterPro" id="IPR022973">
    <property type="entry name" value="Ribosomal_uL10_bac"/>
</dbReference>
<dbReference type="InterPro" id="IPR047865">
    <property type="entry name" value="Ribosomal_uL10_bac_type"/>
</dbReference>
<dbReference type="InterPro" id="IPR002363">
    <property type="entry name" value="Ribosomal_uL10_CS_bac"/>
</dbReference>
<dbReference type="NCBIfam" id="NF000955">
    <property type="entry name" value="PRK00099.1-1"/>
    <property type="match status" value="1"/>
</dbReference>
<dbReference type="PANTHER" id="PTHR11560">
    <property type="entry name" value="39S RIBOSOMAL PROTEIN L10, MITOCHONDRIAL"/>
    <property type="match status" value="1"/>
</dbReference>
<dbReference type="Pfam" id="PF00466">
    <property type="entry name" value="Ribosomal_L10"/>
    <property type="match status" value="1"/>
</dbReference>
<dbReference type="SUPFAM" id="SSF160369">
    <property type="entry name" value="Ribosomal protein L10-like"/>
    <property type="match status" value="1"/>
</dbReference>
<dbReference type="PROSITE" id="PS01109">
    <property type="entry name" value="RIBOSOMAL_L10"/>
    <property type="match status" value="1"/>
</dbReference>
<evidence type="ECO:0000255" key="1">
    <source>
        <dbReference type="HAMAP-Rule" id="MF_00362"/>
    </source>
</evidence>
<evidence type="ECO:0000305" key="2"/>